<accession>Q97CD9</accession>
<keyword id="KW-0687">Ribonucleoprotein</keyword>
<keyword id="KW-0689">Ribosomal protein</keyword>
<keyword id="KW-0694">RNA-binding</keyword>
<keyword id="KW-0699">rRNA-binding</keyword>
<dbReference type="EMBL" id="BA000011">
    <property type="protein sequence ID" value="BAB59305.1"/>
    <property type="molecule type" value="Genomic_DNA"/>
</dbReference>
<dbReference type="SMR" id="Q97CD9"/>
<dbReference type="STRING" id="273116.gene:9380933"/>
<dbReference type="PaxDb" id="273116-14324377"/>
<dbReference type="KEGG" id="tvo:TVG0172869"/>
<dbReference type="eggNOG" id="arCOG04254">
    <property type="taxonomic scope" value="Archaea"/>
</dbReference>
<dbReference type="HOGENOM" id="CLU_063975_0_0_2"/>
<dbReference type="OrthoDB" id="45346at2157"/>
<dbReference type="PhylomeDB" id="Q97CD9"/>
<dbReference type="Proteomes" id="UP000001017">
    <property type="component" value="Chromosome"/>
</dbReference>
<dbReference type="GO" id="GO:0015935">
    <property type="term" value="C:small ribosomal subunit"/>
    <property type="evidence" value="ECO:0007669"/>
    <property type="project" value="InterPro"/>
</dbReference>
<dbReference type="GO" id="GO:0019843">
    <property type="term" value="F:rRNA binding"/>
    <property type="evidence" value="ECO:0007669"/>
    <property type="project" value="UniProtKB-UniRule"/>
</dbReference>
<dbReference type="GO" id="GO:0003735">
    <property type="term" value="F:structural constituent of ribosome"/>
    <property type="evidence" value="ECO:0007669"/>
    <property type="project" value="InterPro"/>
</dbReference>
<dbReference type="GO" id="GO:0006412">
    <property type="term" value="P:translation"/>
    <property type="evidence" value="ECO:0007669"/>
    <property type="project" value="UniProtKB-UniRule"/>
</dbReference>
<dbReference type="CDD" id="cd14867">
    <property type="entry name" value="uS7_Eukaryote"/>
    <property type="match status" value="1"/>
</dbReference>
<dbReference type="Gene3D" id="1.10.455.10">
    <property type="entry name" value="Ribosomal protein S7 domain"/>
    <property type="match status" value="1"/>
</dbReference>
<dbReference type="HAMAP" id="MF_00480_A">
    <property type="entry name" value="Ribosomal_uS7_A"/>
    <property type="match status" value="1"/>
</dbReference>
<dbReference type="InterPro" id="IPR000235">
    <property type="entry name" value="Ribosomal_uS7"/>
</dbReference>
<dbReference type="InterPro" id="IPR026018">
    <property type="entry name" value="Ribosomal_uS7_arc"/>
</dbReference>
<dbReference type="InterPro" id="IPR023798">
    <property type="entry name" value="Ribosomal_uS7_dom"/>
</dbReference>
<dbReference type="InterPro" id="IPR036823">
    <property type="entry name" value="Ribosomal_uS7_dom_sf"/>
</dbReference>
<dbReference type="InterPro" id="IPR005716">
    <property type="entry name" value="Ribosomal_uS7_euk/arc"/>
</dbReference>
<dbReference type="NCBIfam" id="NF003106">
    <property type="entry name" value="PRK04027.1"/>
    <property type="match status" value="1"/>
</dbReference>
<dbReference type="NCBIfam" id="TIGR01028">
    <property type="entry name" value="uS7_euk_arch"/>
    <property type="match status" value="1"/>
</dbReference>
<dbReference type="PANTHER" id="PTHR11205">
    <property type="entry name" value="RIBOSOMAL PROTEIN S7"/>
    <property type="match status" value="1"/>
</dbReference>
<dbReference type="Pfam" id="PF00177">
    <property type="entry name" value="Ribosomal_S7"/>
    <property type="match status" value="1"/>
</dbReference>
<dbReference type="PIRSF" id="PIRSF002122">
    <property type="entry name" value="RPS7p_RPS7a_RPS5e_RPS7o"/>
    <property type="match status" value="1"/>
</dbReference>
<dbReference type="SUPFAM" id="SSF47973">
    <property type="entry name" value="Ribosomal protein S7"/>
    <property type="match status" value="1"/>
</dbReference>
<gene>
    <name evidence="1" type="primary">rps7</name>
    <name type="ordered locus">TV0163</name>
    <name type="ORF">TVG0172869</name>
</gene>
<organism>
    <name type="scientific">Thermoplasma volcanium (strain ATCC 51530 / DSM 4299 / JCM 9571 / NBRC 15438 / GSS1)</name>
    <dbReference type="NCBI Taxonomy" id="273116"/>
    <lineage>
        <taxon>Archaea</taxon>
        <taxon>Methanobacteriati</taxon>
        <taxon>Thermoplasmatota</taxon>
        <taxon>Thermoplasmata</taxon>
        <taxon>Thermoplasmatales</taxon>
        <taxon>Thermoplasmataceae</taxon>
        <taxon>Thermoplasma</taxon>
    </lineage>
</organism>
<protein>
    <recommendedName>
        <fullName evidence="1">Small ribosomal subunit protein uS7</fullName>
    </recommendedName>
    <alternativeName>
        <fullName evidence="2">30S ribosomal protein S7</fullName>
    </alternativeName>
</protein>
<name>RS7_THEVO</name>
<evidence type="ECO:0000255" key="1">
    <source>
        <dbReference type="HAMAP-Rule" id="MF_00480"/>
    </source>
</evidence>
<evidence type="ECO:0000305" key="2"/>
<reference key="1">
    <citation type="journal article" date="2000" name="Proc. Natl. Acad. Sci. U.S.A.">
        <title>Archaeal adaptation to higher temperatures revealed by genomic sequence of Thermoplasma volcanium.</title>
        <authorList>
            <person name="Kawashima T."/>
            <person name="Amano N."/>
            <person name="Koike H."/>
            <person name="Makino S."/>
            <person name="Higuchi S."/>
            <person name="Kawashima-Ohya Y."/>
            <person name="Watanabe K."/>
            <person name="Yamazaki M."/>
            <person name="Kanehori K."/>
            <person name="Kawamoto T."/>
            <person name="Nunoshiba T."/>
            <person name="Yamamoto Y."/>
            <person name="Aramaki H."/>
            <person name="Makino K."/>
            <person name="Suzuki M."/>
        </authorList>
    </citation>
    <scope>NUCLEOTIDE SEQUENCE [LARGE SCALE GENOMIC DNA]</scope>
    <source>
        <strain>ATCC 51530 / DSM 4299 / JCM 9571 / NBRC 15438 / GSS1</strain>
    </source>
</reference>
<proteinExistence type="inferred from homology"/>
<feature type="chain" id="PRO_0000124417" description="Small ribosomal subunit protein uS7">
    <location>
        <begin position="1"/>
        <end position="184"/>
    </location>
</feature>
<sequence length="184" mass="20475">MLFDKYDVNSVEVHDPGMVKYINVKSALNLHTGGRFSSYYAGKINMNVVERLINKLMRTEKWTGKKYSAYKITKDAFDIIADKTKQNPLQILINAIENAGPREEVTRLKYGGIAVPKSVDVSPSRRVDEALRNIATGATNASFKSKKSIVNCLADEIMLAAKNDASSFAISKKEEIERVAQSAR</sequence>
<comment type="function">
    <text evidence="1">One of the primary rRNA binding proteins, it binds directly to 16S rRNA where it nucleates assembly of the head domain of the 30S subunit. Is located at the subunit interface close to the decoding center.</text>
</comment>
<comment type="subunit">
    <text evidence="1">Part of the 30S ribosomal subunit.</text>
</comment>
<comment type="similarity">
    <text evidence="1">Belongs to the universal ribosomal protein uS7 family.</text>
</comment>